<name>PAN1_PODAN</name>
<sequence>MYSNPNSFLGGNSQRPGQPQYGNQFGAGAGQPQLQQPGPFAPQPTGFGQQPALQQQYTGYPGLQAPQPTGQLQPQFTGFGQAPQQNVGAAAPPMPAMPQQFQQQFQQQQQQFQQQPQQTSSPFGAAPSQQPPASALAPPAPPMKPQPTGFHEMAASFQTAGGSKSTASAPRKTNKIPNIRLSFITAQDQAKFETLFKSAVGDGQTTMTGEKARDLLLRSRLDGDSLSHIWTLADTTRSGQLHFPEFALAMYLCNLKLTGKTLPEHLPENIKNEVSSMVDIINFSVAEEAANASDSGIRQNTATPPVIQHPQPQPSNSQLLQAQMTGFPSQQTGFLGAQPTGMPQATGYTGPRPPMPPMPTGFGSSLTPNAGPGGMVAPLNAQPTGIPGQWGLVNTPATGLPLIDALQARMMPQQGREQQTYTTAGLQGNAVIPWAITKDEKTRYDSLFRAWDGLHKGYISGDQAIEILGQSGLEKPDLERVWTLADNGNKGRLDMDEFAVAMHLIYRKLNGYPVPNQLPPELVPPSTRNFNQSIGMVKNMLHQESEYRKNSGAALLPQKTGVSYLKGHSFKGAGAGFGNRKDATVFKNNDEEVGYRSSARRRVGNNSPRPESPASVNSSEELSIEQLRKKIKEKQVLLDAMDFADEKHAEEDDILDRRDRREADELYRRIRRIQEDIDNHPDASLISADSDAERRALKRQLQNLTDKIPDLASQVRKTEKAIADARLELFRLRDAKAHPSSAAAIIGTGPGGTVTESDRLKARAKAMMQQRTAALTGKKIEVSNDDLDAPKRLEEESIKIRTEKENNERMVRDVEDSVREFAKGIEDNMKEGAQDSTTEHEKRRWEDGLGVEDEVRDFIYDLQRSSRAARIRSQDRQGGRQPTQEPTRAEAPPSARSVSPAVSRTSTPSAPVAGGGSYSSYKTPEERAAFIKQQAEQRMAERLAALGIKAPTKPGETAAQRMERERAERAAKLRQAEEEDARREAERQARIAEETGAPAPAAQAAVPKPEGKKPPPPPSRKTPKVDDRRAEEEAAARKAEEGRLERERGEQERQTRELEERAKDQEDELAKERAEADARLKALEEQVRQGKLKKEEEKRKKKAAMAEAKEQEAKLAQRRAEIEAARKREEELRKQLEALDVEDSSSDDDEGPEQITPQASTPTLGGSQVGGSQELEPAPPTPVPAPVQSPPQIVTSSPAETESRNPYFRMRAQAAETTPAPPAPPAPVAPPPPPQPDVSTNPFHRMTQAAAAPAPSGPVSRKRPEDDGWGSDKEDDDEDSDDDRPGQGAAHLASILFGTMAPPRPLSATGDKSAAASPPVTSPVASPPPAIPSPTAAGAPPAPPPPPPMPGMGAPPPPPPPPPMPGSGAPAAPPPPPPPAPGGAPPPPPPPPPPPGGAPAPAAPAGGRPAAFLGEIQAGRALRKTQTKDKSGAAVAGRVLD</sequence>
<gene>
    <name type="primary">PAN1</name>
    <name type="ordered locus">Pa_7_8140</name>
    <name type="ORF">PODANS_7_8140</name>
</gene>
<accession>B2AWS3</accession>
<accession>A0A090CTR5</accession>
<evidence type="ECO:0000250" key="1"/>
<evidence type="ECO:0000255" key="2"/>
<evidence type="ECO:0000255" key="3">
    <source>
        <dbReference type="PROSITE-ProRule" id="PRU00077"/>
    </source>
</evidence>
<evidence type="ECO:0000255" key="4">
    <source>
        <dbReference type="PROSITE-ProRule" id="PRU00448"/>
    </source>
</evidence>
<evidence type="ECO:0000256" key="5">
    <source>
        <dbReference type="SAM" id="MobiDB-lite"/>
    </source>
</evidence>
<evidence type="ECO:0000305" key="6"/>
<dbReference type="EMBL" id="CU633900">
    <property type="protein sequence ID" value="CAP68847.1"/>
    <property type="molecule type" value="Genomic_DNA"/>
</dbReference>
<dbReference type="EMBL" id="FO904942">
    <property type="protein sequence ID" value="CDP32330.1"/>
    <property type="molecule type" value="Genomic_DNA"/>
</dbReference>
<dbReference type="RefSeq" id="XP_001908174.1">
    <property type="nucleotide sequence ID" value="XM_001908139.1"/>
</dbReference>
<dbReference type="SMR" id="B2AWS3"/>
<dbReference type="FunCoup" id="B2AWS3">
    <property type="interactions" value="56"/>
</dbReference>
<dbReference type="STRING" id="515849.B2AWS3"/>
<dbReference type="GeneID" id="6192616"/>
<dbReference type="KEGG" id="pan:PODANSg5209"/>
<dbReference type="eggNOG" id="KOG0998">
    <property type="taxonomic scope" value="Eukaryota"/>
</dbReference>
<dbReference type="HOGENOM" id="CLU_001963_1_0_1"/>
<dbReference type="InParanoid" id="B2AWS3"/>
<dbReference type="OrthoDB" id="2015333at2759"/>
<dbReference type="Proteomes" id="UP000001197">
    <property type="component" value="Chromosome 7"/>
</dbReference>
<dbReference type="GO" id="GO:0030479">
    <property type="term" value="C:actin cortical patch"/>
    <property type="evidence" value="ECO:0007669"/>
    <property type="project" value="UniProtKB-SubCell"/>
</dbReference>
<dbReference type="GO" id="GO:0010008">
    <property type="term" value="C:endosome membrane"/>
    <property type="evidence" value="ECO:0007669"/>
    <property type="project" value="UniProtKB-SubCell"/>
</dbReference>
<dbReference type="GO" id="GO:0005886">
    <property type="term" value="C:plasma membrane"/>
    <property type="evidence" value="ECO:0007669"/>
    <property type="project" value="UniProtKB-SubCell"/>
</dbReference>
<dbReference type="GO" id="GO:0003779">
    <property type="term" value="F:actin binding"/>
    <property type="evidence" value="ECO:0007669"/>
    <property type="project" value="UniProtKB-KW"/>
</dbReference>
<dbReference type="GO" id="GO:0005509">
    <property type="term" value="F:calcium ion binding"/>
    <property type="evidence" value="ECO:0007669"/>
    <property type="project" value="InterPro"/>
</dbReference>
<dbReference type="GO" id="GO:0006897">
    <property type="term" value="P:endocytosis"/>
    <property type="evidence" value="ECO:0007669"/>
    <property type="project" value="UniProtKB-KW"/>
</dbReference>
<dbReference type="GO" id="GO:0016197">
    <property type="term" value="P:endosomal transport"/>
    <property type="evidence" value="ECO:0007669"/>
    <property type="project" value="TreeGrafter"/>
</dbReference>
<dbReference type="CDD" id="cd00052">
    <property type="entry name" value="EH"/>
    <property type="match status" value="2"/>
</dbReference>
<dbReference type="FunFam" id="1.10.238.10:FF:000349">
    <property type="entry name" value="Actin cytoskeleton-regulatory complex protein PAN1"/>
    <property type="match status" value="1"/>
</dbReference>
<dbReference type="Gene3D" id="1.10.238.10">
    <property type="entry name" value="EF-hand"/>
    <property type="match status" value="2"/>
</dbReference>
<dbReference type="InterPro" id="IPR011992">
    <property type="entry name" value="EF-hand-dom_pair"/>
</dbReference>
<dbReference type="InterPro" id="IPR002048">
    <property type="entry name" value="EF_hand_dom"/>
</dbReference>
<dbReference type="InterPro" id="IPR000261">
    <property type="entry name" value="EH_dom"/>
</dbReference>
<dbReference type="InterPro" id="IPR003124">
    <property type="entry name" value="WH2_dom"/>
</dbReference>
<dbReference type="PANTHER" id="PTHR11216">
    <property type="entry name" value="EH DOMAIN"/>
    <property type="match status" value="1"/>
</dbReference>
<dbReference type="PANTHER" id="PTHR11216:SF174">
    <property type="entry name" value="GH06923P"/>
    <property type="match status" value="1"/>
</dbReference>
<dbReference type="Pfam" id="PF12763">
    <property type="entry name" value="EH"/>
    <property type="match status" value="2"/>
</dbReference>
<dbReference type="Pfam" id="PF02205">
    <property type="entry name" value="WH2"/>
    <property type="match status" value="1"/>
</dbReference>
<dbReference type="PRINTS" id="PR01217">
    <property type="entry name" value="PRICHEXTENSN"/>
</dbReference>
<dbReference type="SMART" id="SM00054">
    <property type="entry name" value="EFh"/>
    <property type="match status" value="2"/>
</dbReference>
<dbReference type="SMART" id="SM00027">
    <property type="entry name" value="EH"/>
    <property type="match status" value="2"/>
</dbReference>
<dbReference type="SUPFAM" id="SSF47473">
    <property type="entry name" value="EF-hand"/>
    <property type="match status" value="2"/>
</dbReference>
<dbReference type="PROSITE" id="PS50222">
    <property type="entry name" value="EF_HAND_2"/>
    <property type="match status" value="2"/>
</dbReference>
<dbReference type="PROSITE" id="PS50031">
    <property type="entry name" value="EH"/>
    <property type="match status" value="2"/>
</dbReference>
<reference key="1">
    <citation type="journal article" date="2008" name="Genome Biol.">
        <title>The genome sequence of the model ascomycete fungus Podospora anserina.</title>
        <authorList>
            <person name="Espagne E."/>
            <person name="Lespinet O."/>
            <person name="Malagnac F."/>
            <person name="Da Silva C."/>
            <person name="Jaillon O."/>
            <person name="Porcel B.M."/>
            <person name="Couloux A."/>
            <person name="Aury J.-M."/>
            <person name="Segurens B."/>
            <person name="Poulain J."/>
            <person name="Anthouard V."/>
            <person name="Grossetete S."/>
            <person name="Khalili H."/>
            <person name="Coppin E."/>
            <person name="Dequard-Chablat M."/>
            <person name="Picard M."/>
            <person name="Contamine V."/>
            <person name="Arnaise S."/>
            <person name="Bourdais A."/>
            <person name="Berteaux-Lecellier V."/>
            <person name="Gautheret D."/>
            <person name="de Vries R.P."/>
            <person name="Battaglia E."/>
            <person name="Coutinho P.M."/>
            <person name="Danchin E.G.J."/>
            <person name="Henrissat B."/>
            <person name="El Khoury R."/>
            <person name="Sainsard-Chanet A."/>
            <person name="Boivin A."/>
            <person name="Pinan-Lucarre B."/>
            <person name="Sellem C.H."/>
            <person name="Debuchy R."/>
            <person name="Wincker P."/>
            <person name="Weissenbach J."/>
            <person name="Silar P."/>
        </authorList>
    </citation>
    <scope>NUCLEOTIDE SEQUENCE [LARGE SCALE GENOMIC DNA]</scope>
    <source>
        <strain>S / ATCC MYA-4624 / DSM 980 / FGSC 10383</strain>
    </source>
</reference>
<reference key="2">
    <citation type="journal article" date="2014" name="Genetics">
        <title>Maintaining two mating types: Structure of the mating type locus and its role in heterokaryosis in Podospora anserina.</title>
        <authorList>
            <person name="Grognet P."/>
            <person name="Bidard F."/>
            <person name="Kuchly C."/>
            <person name="Tong L.C.H."/>
            <person name="Coppin E."/>
            <person name="Benkhali J.A."/>
            <person name="Couloux A."/>
            <person name="Wincker P."/>
            <person name="Debuchy R."/>
            <person name="Silar P."/>
        </authorList>
    </citation>
    <scope>GENOME REANNOTATION</scope>
    <source>
        <strain>S / ATCC MYA-4624 / DSM 980 / FGSC 10383</strain>
    </source>
</reference>
<keyword id="KW-0009">Actin-binding</keyword>
<keyword id="KW-1003">Cell membrane</keyword>
<keyword id="KW-0175">Coiled coil</keyword>
<keyword id="KW-0963">Cytoplasm</keyword>
<keyword id="KW-0206">Cytoskeleton</keyword>
<keyword id="KW-0254">Endocytosis</keyword>
<keyword id="KW-0967">Endosome</keyword>
<keyword id="KW-0472">Membrane</keyword>
<keyword id="KW-1185">Reference proteome</keyword>
<keyword id="KW-0677">Repeat</keyword>
<protein>
    <recommendedName>
        <fullName>Actin cytoskeleton-regulatory complex protein PAN1</fullName>
    </recommendedName>
</protein>
<feature type="chain" id="PRO_0000349484" description="Actin cytoskeleton-regulatory complex protein PAN1">
    <location>
        <begin position="1"/>
        <end position="1441"/>
    </location>
</feature>
<feature type="domain" description="EH 1" evidence="3">
    <location>
        <begin position="188"/>
        <end position="277"/>
    </location>
</feature>
<feature type="domain" description="EF-hand 1" evidence="4">
    <location>
        <begin position="221"/>
        <end position="256"/>
    </location>
</feature>
<feature type="domain" description="EH 2" evidence="3">
    <location>
        <begin position="440"/>
        <end position="529"/>
    </location>
</feature>
<feature type="domain" description="EF-hand 2" evidence="4">
    <location>
        <begin position="473"/>
        <end position="508"/>
    </location>
</feature>
<feature type="region of interest" description="Disordered" evidence="5">
    <location>
        <begin position="1"/>
        <end position="150"/>
    </location>
</feature>
<feature type="region of interest" description="Disordered" evidence="5">
    <location>
        <begin position="292"/>
        <end position="316"/>
    </location>
</feature>
<feature type="region of interest" description="Disordered" evidence="5">
    <location>
        <begin position="594"/>
        <end position="622"/>
    </location>
</feature>
<feature type="region of interest" description="Disordered" evidence="5">
    <location>
        <begin position="824"/>
        <end position="845"/>
    </location>
</feature>
<feature type="region of interest" description="Disordered" evidence="5">
    <location>
        <begin position="867"/>
        <end position="1441"/>
    </location>
</feature>
<feature type="coiled-coil region" evidence="2">
    <location>
        <begin position="618"/>
        <end position="735"/>
    </location>
</feature>
<feature type="coiled-coil region" evidence="2">
    <location>
        <begin position="791"/>
        <end position="820"/>
    </location>
</feature>
<feature type="coiled-coil region" evidence="2">
    <location>
        <begin position="956"/>
        <end position="997"/>
    </location>
</feature>
<feature type="coiled-coil region" evidence="2">
    <location>
        <begin position="1028"/>
        <end position="1143"/>
    </location>
</feature>
<feature type="compositionally biased region" description="Polar residues" evidence="5">
    <location>
        <begin position="1"/>
        <end position="23"/>
    </location>
</feature>
<feature type="compositionally biased region" description="Low complexity" evidence="5">
    <location>
        <begin position="24"/>
        <end position="38"/>
    </location>
</feature>
<feature type="compositionally biased region" description="Polar residues" evidence="5">
    <location>
        <begin position="46"/>
        <end position="58"/>
    </location>
</feature>
<feature type="compositionally biased region" description="Polar residues" evidence="5">
    <location>
        <begin position="66"/>
        <end position="87"/>
    </location>
</feature>
<feature type="compositionally biased region" description="Low complexity" evidence="5">
    <location>
        <begin position="97"/>
        <end position="137"/>
    </location>
</feature>
<feature type="compositionally biased region" description="Polar residues" evidence="5">
    <location>
        <begin position="292"/>
        <end position="303"/>
    </location>
</feature>
<feature type="compositionally biased region" description="Polar residues" evidence="5">
    <location>
        <begin position="604"/>
        <end position="621"/>
    </location>
</feature>
<feature type="compositionally biased region" description="Low complexity" evidence="5">
    <location>
        <begin position="891"/>
        <end position="911"/>
    </location>
</feature>
<feature type="compositionally biased region" description="Basic and acidic residues" evidence="5">
    <location>
        <begin position="961"/>
        <end position="993"/>
    </location>
</feature>
<feature type="compositionally biased region" description="Low complexity" evidence="5">
    <location>
        <begin position="994"/>
        <end position="1008"/>
    </location>
</feature>
<feature type="compositionally biased region" description="Basic and acidic residues" evidence="5">
    <location>
        <begin position="1023"/>
        <end position="1098"/>
    </location>
</feature>
<feature type="compositionally biased region" description="Basic and acidic residues" evidence="5">
    <location>
        <begin position="1107"/>
        <end position="1137"/>
    </location>
</feature>
<feature type="compositionally biased region" description="Acidic residues" evidence="5">
    <location>
        <begin position="1139"/>
        <end position="1152"/>
    </location>
</feature>
<feature type="compositionally biased region" description="Polar residues" evidence="5">
    <location>
        <begin position="1155"/>
        <end position="1166"/>
    </location>
</feature>
<feature type="compositionally biased region" description="Pro residues" evidence="5">
    <location>
        <begin position="1177"/>
        <end position="1189"/>
    </location>
</feature>
<feature type="compositionally biased region" description="Pro residues" evidence="5">
    <location>
        <begin position="1219"/>
        <end position="1236"/>
    </location>
</feature>
<feature type="compositionally biased region" description="Basic and acidic residues" evidence="5">
    <location>
        <begin position="1262"/>
        <end position="1272"/>
    </location>
</feature>
<feature type="compositionally biased region" description="Acidic residues" evidence="5">
    <location>
        <begin position="1273"/>
        <end position="1282"/>
    </location>
</feature>
<feature type="compositionally biased region" description="Low complexity" evidence="5">
    <location>
        <begin position="1313"/>
        <end position="1324"/>
    </location>
</feature>
<feature type="compositionally biased region" description="Pro residues" evidence="5">
    <location>
        <begin position="1340"/>
        <end position="1402"/>
    </location>
</feature>
<feature type="sequence conflict" description="In Ref. 1; CAP68847." evidence="6" ref="1">
    <original>R</original>
    <variation>C</variation>
    <location>
        <position position="507"/>
    </location>
</feature>
<organism>
    <name type="scientific">Podospora anserina (strain S / ATCC MYA-4624 / DSM 980 / FGSC 10383)</name>
    <name type="common">Pleurage anserina</name>
    <dbReference type="NCBI Taxonomy" id="515849"/>
    <lineage>
        <taxon>Eukaryota</taxon>
        <taxon>Fungi</taxon>
        <taxon>Dikarya</taxon>
        <taxon>Ascomycota</taxon>
        <taxon>Pezizomycotina</taxon>
        <taxon>Sordariomycetes</taxon>
        <taxon>Sordariomycetidae</taxon>
        <taxon>Sordariales</taxon>
        <taxon>Podosporaceae</taxon>
        <taxon>Podospora</taxon>
        <taxon>Podospora anserina</taxon>
    </lineage>
</organism>
<comment type="function">
    <text evidence="1">Component of the PAN1 actin cytoskeleton-regulatory complex required for the internalization of endosomes during actin-coupled endocytosis. The complex links the site of endocytosis to the cell membrane-associated actin cytoskeleton. Mediates uptake of external molecules and vacuolar degradation of plasma membrane proteins. Plays a role in the proper organization of the cell membrane-associated actin cytoskeleton and promotes its destabilization (By similarity).</text>
</comment>
<comment type="subunit">
    <text evidence="1">Component of the PAN1 actin cytoskeleton-regulatory complex.</text>
</comment>
<comment type="subcellular location">
    <subcellularLocation>
        <location evidence="1">Cell membrane</location>
        <topology evidence="1">Peripheral membrane protein</topology>
        <orientation evidence="1">Cytoplasmic side</orientation>
    </subcellularLocation>
    <subcellularLocation>
        <location evidence="1">Endosome membrane</location>
        <topology evidence="1">Peripheral membrane protein</topology>
        <orientation evidence="1">Cytoplasmic side</orientation>
    </subcellularLocation>
    <subcellularLocation>
        <location evidence="1">Cytoplasm</location>
        <location evidence="1">Cytoskeleton</location>
        <location evidence="1">Actin patch</location>
    </subcellularLocation>
    <text evidence="1">Cytoplasmic and cortical actin patches.</text>
</comment>
<comment type="similarity">
    <text evidence="6">Belongs to the PAN1 family.</text>
</comment>
<proteinExistence type="inferred from homology"/>